<comment type="catalytic activity">
    <reaction evidence="1">
        <text>L-histidine = trans-urocanate + NH4(+)</text>
        <dbReference type="Rhea" id="RHEA:21232"/>
        <dbReference type="ChEBI" id="CHEBI:17771"/>
        <dbReference type="ChEBI" id="CHEBI:28938"/>
        <dbReference type="ChEBI" id="CHEBI:57595"/>
        <dbReference type="EC" id="4.3.1.3"/>
    </reaction>
</comment>
<comment type="pathway">
    <text evidence="1">Amino-acid degradation; L-histidine degradation into L-glutamate; N-formimidoyl-L-glutamate from L-histidine: step 1/3.</text>
</comment>
<comment type="subcellular location">
    <subcellularLocation>
        <location evidence="1">Cytoplasm</location>
    </subcellularLocation>
</comment>
<comment type="PTM">
    <text evidence="1">Contains an active site 4-methylidene-imidazol-5-one (MIO), which is formed autocatalytically by cyclization and dehydration of residues Ala-Ser-Gly.</text>
</comment>
<comment type="similarity">
    <text evidence="1">Belongs to the PAL/histidase family.</text>
</comment>
<organism>
    <name type="scientific">Bacillus anthracis (strain A0248)</name>
    <dbReference type="NCBI Taxonomy" id="592021"/>
    <lineage>
        <taxon>Bacteria</taxon>
        <taxon>Bacillati</taxon>
        <taxon>Bacillota</taxon>
        <taxon>Bacilli</taxon>
        <taxon>Bacillales</taxon>
        <taxon>Bacillaceae</taxon>
        <taxon>Bacillus</taxon>
        <taxon>Bacillus cereus group</taxon>
    </lineage>
</organism>
<name>HUTH_BACAA</name>
<accession>C3P4M2</accession>
<evidence type="ECO:0000255" key="1">
    <source>
        <dbReference type="HAMAP-Rule" id="MF_00229"/>
    </source>
</evidence>
<sequence>MITLTGHTLTIEEMKRLLLEGEGVTACPTSMQKVAECREVVEKIVENGKVVYGITTGFGKFSDVLIQKDDVKALQHNLIQSHACGIGDPFPEEVSRGMLILRANTMLKGVSGVRPLVVNMLLEFVNRKIHPVVPQQGSLGASGDLAPLSHLALILLGEGEVFYKGKRVHAMVALTEEGLEPIELEAKEGLALINGTQAMTAQGVLSYIEAEATAYQAELIASMTIEGLQGIIDAFDENVHKARGYKEQVEVASRIRDILHDSKLTTKQGELRVQDAYSLRCIPQVHGASWQVLNYVKEKLEIEMNAATDNPLIFDGGEKVISGGNFHGQPIAFAMDFLKVGMAELANISERRIERLVNPQLNDLPPFLSPEPGLQSGAMIMQYAAASLVSENKTLAHPASVDSIPSSANQEDHVSMGTIASRHAHQIIQNVRRVLSIEMICAMQAAEYRGIENMSTVTKSFYHQGRQQVPSITNDRIFSTDIENITHWLKTNYSIKERLDVNAAL</sequence>
<protein>
    <recommendedName>
        <fullName evidence="1">Histidine ammonia-lyase</fullName>
        <shortName evidence="1">Histidase</shortName>
        <ecNumber evidence="1">4.3.1.3</ecNumber>
    </recommendedName>
</protein>
<feature type="chain" id="PRO_1000125087" description="Histidine ammonia-lyase">
    <location>
        <begin position="1"/>
        <end position="505"/>
    </location>
</feature>
<feature type="modified residue" description="2,3-didehydroalanine (Ser)" evidence="1">
    <location>
        <position position="142"/>
    </location>
</feature>
<feature type="cross-link" description="5-imidazolinone (Ala-Gly)" evidence="1">
    <location>
        <begin position="141"/>
        <end position="143"/>
    </location>
</feature>
<proteinExistence type="inferred from homology"/>
<keyword id="KW-0963">Cytoplasm</keyword>
<keyword id="KW-0369">Histidine metabolism</keyword>
<keyword id="KW-0456">Lyase</keyword>
<reference key="1">
    <citation type="submission" date="2009-04" db="EMBL/GenBank/DDBJ databases">
        <title>Genome sequence of Bacillus anthracis A0248.</title>
        <authorList>
            <person name="Dodson R.J."/>
            <person name="Munk A.C."/>
            <person name="Bruce D."/>
            <person name="Detter C."/>
            <person name="Tapia R."/>
            <person name="Sutton G."/>
            <person name="Sims D."/>
            <person name="Brettin T."/>
        </authorList>
    </citation>
    <scope>NUCLEOTIDE SEQUENCE [LARGE SCALE GENOMIC DNA]</scope>
    <source>
        <strain>A0248</strain>
    </source>
</reference>
<gene>
    <name evidence="1" type="primary">hutH</name>
    <name type="ordered locus">BAA_3739</name>
</gene>
<dbReference type="EC" id="4.3.1.3" evidence="1"/>
<dbReference type="EMBL" id="CP001598">
    <property type="protein sequence ID" value="ACQ49132.1"/>
    <property type="molecule type" value="Genomic_DNA"/>
</dbReference>
<dbReference type="RefSeq" id="WP_000631851.1">
    <property type="nucleotide sequence ID" value="NC_012659.1"/>
</dbReference>
<dbReference type="SMR" id="C3P4M2"/>
<dbReference type="GeneID" id="45023433"/>
<dbReference type="KEGG" id="bai:BAA_3739"/>
<dbReference type="HOGENOM" id="CLU_014801_4_0_9"/>
<dbReference type="UniPathway" id="UPA00379">
    <property type="reaction ID" value="UER00549"/>
</dbReference>
<dbReference type="GO" id="GO:0005737">
    <property type="term" value="C:cytoplasm"/>
    <property type="evidence" value="ECO:0007669"/>
    <property type="project" value="UniProtKB-SubCell"/>
</dbReference>
<dbReference type="GO" id="GO:0004397">
    <property type="term" value="F:histidine ammonia-lyase activity"/>
    <property type="evidence" value="ECO:0007669"/>
    <property type="project" value="UniProtKB-UniRule"/>
</dbReference>
<dbReference type="GO" id="GO:0019556">
    <property type="term" value="P:L-histidine catabolic process to glutamate and formamide"/>
    <property type="evidence" value="ECO:0007669"/>
    <property type="project" value="UniProtKB-UniPathway"/>
</dbReference>
<dbReference type="GO" id="GO:0019557">
    <property type="term" value="P:L-histidine catabolic process to glutamate and formate"/>
    <property type="evidence" value="ECO:0007669"/>
    <property type="project" value="UniProtKB-UniPathway"/>
</dbReference>
<dbReference type="CDD" id="cd00332">
    <property type="entry name" value="PAL-HAL"/>
    <property type="match status" value="1"/>
</dbReference>
<dbReference type="FunFam" id="1.10.275.10:FF:000008">
    <property type="entry name" value="Histidine ammonia-lyase"/>
    <property type="match status" value="1"/>
</dbReference>
<dbReference type="FunFam" id="1.20.200.10:FF:000003">
    <property type="entry name" value="Histidine ammonia-lyase"/>
    <property type="match status" value="1"/>
</dbReference>
<dbReference type="Gene3D" id="1.20.200.10">
    <property type="entry name" value="Fumarase/aspartase (Central domain)"/>
    <property type="match status" value="1"/>
</dbReference>
<dbReference type="Gene3D" id="1.10.275.10">
    <property type="entry name" value="Fumarase/aspartase (N-terminal domain)"/>
    <property type="match status" value="1"/>
</dbReference>
<dbReference type="HAMAP" id="MF_00229">
    <property type="entry name" value="His_ammonia_lyase"/>
    <property type="match status" value="1"/>
</dbReference>
<dbReference type="InterPro" id="IPR001106">
    <property type="entry name" value="Aromatic_Lyase"/>
</dbReference>
<dbReference type="InterPro" id="IPR024083">
    <property type="entry name" value="Fumarase/histidase_N"/>
</dbReference>
<dbReference type="InterPro" id="IPR005921">
    <property type="entry name" value="HutH"/>
</dbReference>
<dbReference type="InterPro" id="IPR008948">
    <property type="entry name" value="L-Aspartase-like"/>
</dbReference>
<dbReference type="InterPro" id="IPR022313">
    <property type="entry name" value="Phe/His_NH3-lyase_AS"/>
</dbReference>
<dbReference type="NCBIfam" id="TIGR01225">
    <property type="entry name" value="hutH"/>
    <property type="match status" value="1"/>
</dbReference>
<dbReference type="NCBIfam" id="NF006871">
    <property type="entry name" value="PRK09367.1"/>
    <property type="match status" value="1"/>
</dbReference>
<dbReference type="PANTHER" id="PTHR10362">
    <property type="entry name" value="HISTIDINE AMMONIA-LYASE"/>
    <property type="match status" value="1"/>
</dbReference>
<dbReference type="Pfam" id="PF00221">
    <property type="entry name" value="Lyase_aromatic"/>
    <property type="match status" value="1"/>
</dbReference>
<dbReference type="SUPFAM" id="SSF48557">
    <property type="entry name" value="L-aspartase-like"/>
    <property type="match status" value="1"/>
</dbReference>
<dbReference type="PROSITE" id="PS00488">
    <property type="entry name" value="PAL_HISTIDASE"/>
    <property type="match status" value="1"/>
</dbReference>